<dbReference type="EMBL" id="Y07864">
    <property type="protein sequence ID" value="CAA69191.1"/>
    <property type="molecule type" value="Genomic_DNA"/>
</dbReference>
<dbReference type="EMBL" id="CP001510">
    <property type="protein sequence ID" value="ACS42165.1"/>
    <property type="molecule type" value="Genomic_DNA"/>
</dbReference>
<dbReference type="EMBL" id="X15792">
    <property type="status" value="NOT_ANNOTATED_CDS"/>
    <property type="molecule type" value="Genomic_DNA"/>
</dbReference>
<dbReference type="RefSeq" id="WP_003599122.1">
    <property type="nucleotide sequence ID" value="NC_012808.1"/>
</dbReference>
<dbReference type="SMR" id="P30621"/>
<dbReference type="STRING" id="272630.MexAM1_META1p4534"/>
<dbReference type="KEGG" id="mea:Mex_1p4534"/>
<dbReference type="eggNOG" id="COG0714">
    <property type="taxonomic scope" value="Bacteria"/>
</dbReference>
<dbReference type="HOGENOM" id="CLU_034716_0_1_5"/>
<dbReference type="OrthoDB" id="9808397at2"/>
<dbReference type="Proteomes" id="UP000009081">
    <property type="component" value="Chromosome"/>
</dbReference>
<dbReference type="GO" id="GO:0005737">
    <property type="term" value="C:cytoplasm"/>
    <property type="evidence" value="ECO:0007669"/>
    <property type="project" value="UniProtKB-SubCell"/>
</dbReference>
<dbReference type="GO" id="GO:0005524">
    <property type="term" value="F:ATP binding"/>
    <property type="evidence" value="ECO:0007669"/>
    <property type="project" value="UniProtKB-KW"/>
</dbReference>
<dbReference type="GO" id="GO:0016887">
    <property type="term" value="F:ATP hydrolysis activity"/>
    <property type="evidence" value="ECO:0007669"/>
    <property type="project" value="InterPro"/>
</dbReference>
<dbReference type="GO" id="GO:0015945">
    <property type="term" value="P:methanol metabolic process"/>
    <property type="evidence" value="ECO:0007669"/>
    <property type="project" value="UniProtKB-KW"/>
</dbReference>
<dbReference type="CDD" id="cd00009">
    <property type="entry name" value="AAA"/>
    <property type="match status" value="1"/>
</dbReference>
<dbReference type="Gene3D" id="1.10.8.80">
    <property type="entry name" value="Magnesium chelatase subunit I, C-Terminal domain"/>
    <property type="match status" value="1"/>
</dbReference>
<dbReference type="Gene3D" id="3.40.50.300">
    <property type="entry name" value="P-loop containing nucleotide triphosphate hydrolases"/>
    <property type="match status" value="1"/>
</dbReference>
<dbReference type="InterPro" id="IPR003593">
    <property type="entry name" value="AAA+_ATPase"/>
</dbReference>
<dbReference type="InterPro" id="IPR011703">
    <property type="entry name" value="ATPase_AAA-3"/>
</dbReference>
<dbReference type="InterPro" id="IPR050764">
    <property type="entry name" value="CbbQ/NirQ/NorQ/GpvN"/>
</dbReference>
<dbReference type="InterPro" id="IPR041628">
    <property type="entry name" value="ChlI/MoxR_AAA_lid"/>
</dbReference>
<dbReference type="InterPro" id="IPR001270">
    <property type="entry name" value="ClpA/B"/>
</dbReference>
<dbReference type="InterPro" id="IPR027417">
    <property type="entry name" value="P-loop_NTPase"/>
</dbReference>
<dbReference type="PANTHER" id="PTHR42759">
    <property type="entry name" value="MOXR FAMILY PROTEIN"/>
    <property type="match status" value="1"/>
</dbReference>
<dbReference type="PANTHER" id="PTHR42759:SF6">
    <property type="entry name" value="REGULATORY PROTEIN-RELATED"/>
    <property type="match status" value="1"/>
</dbReference>
<dbReference type="Pfam" id="PF07726">
    <property type="entry name" value="AAA_3"/>
    <property type="match status" value="1"/>
</dbReference>
<dbReference type="Pfam" id="PF17863">
    <property type="entry name" value="AAA_lid_2"/>
    <property type="match status" value="1"/>
</dbReference>
<dbReference type="PIRSF" id="PIRSF002849">
    <property type="entry name" value="AAA_ATPase_chaperone_MoxR_prd"/>
    <property type="match status" value="1"/>
</dbReference>
<dbReference type="PRINTS" id="PR00300">
    <property type="entry name" value="CLPPROTEASEA"/>
</dbReference>
<dbReference type="SMART" id="SM00382">
    <property type="entry name" value="AAA"/>
    <property type="match status" value="1"/>
</dbReference>
<dbReference type="SUPFAM" id="SSF52540">
    <property type="entry name" value="P-loop containing nucleoside triphosphate hydrolases"/>
    <property type="match status" value="1"/>
</dbReference>
<evidence type="ECO:0000255" key="1"/>
<evidence type="ECO:0000305" key="2"/>
<sequence>MNTLRPGDAMLTDWRDAAARFEREIAKAVVGQDRAIRLLTIAIFARGHVMLEGDVGVGKTTLLRAVARGLGGAYERVEGTVDMMPTDLIYHTYLGEDGRPRVEPGPVLRRAEDLSVFFFNEINRARPQVHALLLRIMAERSVSAFNREYRFPNLQVFADRNRVEREETFELPAAARDRFLMEIGMEAPRDARARRDLVFDPRFHDTDRLTEEVEAGVLDFERIGTIASAIQHAISAEPAIEAYVVGLWEALVRPGPAGIRLPGIAMDRLVQGGASPRGVAFLVRAARVRAWLEGRDWLVPEDIRAVFPEVMAHRVFLEPVYEMRRAQIVPDLIRAVFETVPAP</sequence>
<proteinExistence type="inferred from homology"/>
<keyword id="KW-0067">ATP-binding</keyword>
<keyword id="KW-0963">Cytoplasm</keyword>
<keyword id="KW-0485">Methanol utilization</keyword>
<keyword id="KW-0547">Nucleotide-binding</keyword>
<keyword id="KW-1185">Reference proteome</keyword>
<name>MOXR_METEA</name>
<gene>
    <name type="primary">moxR</name>
    <name type="synonym">mxaR</name>
    <name type="ordered locus">MexAM1_META1p4534</name>
</gene>
<reference key="1">
    <citation type="journal article" date="1997" name="FEMS Microbiol. Lett.">
        <title>The methanol oxidation genes mxaFJGIR (S) ACKLD in Methylobacterium extorquens.</title>
        <authorList>
            <person name="Amaratunga K."/>
            <person name="Goodwin P.M."/>
            <person name="O'Connor C.D."/>
            <person name="Anthony C."/>
        </authorList>
    </citation>
    <scope>NUCLEOTIDE SEQUENCE [GENOMIC DNA]</scope>
</reference>
<reference key="2">
    <citation type="journal article" date="1997" name="FEMS Microbiol. Lett.">
        <authorList>
            <person name="Amaratunga K."/>
            <person name="Goodwin P.M."/>
            <person name="O'Connor C.D."/>
            <person name="Anthony C."/>
        </authorList>
    </citation>
    <scope>ERRATUM OF PUBMED:8997703</scope>
</reference>
<reference key="3">
    <citation type="journal article" date="2009" name="PLoS ONE">
        <title>Methylobacterium genome sequences: a reference blueprint to investigate microbial metabolism of C1 compounds from natural and industrial sources.</title>
        <authorList>
            <person name="Vuilleumier S."/>
            <person name="Chistoserdova L."/>
            <person name="Lee M.-C."/>
            <person name="Bringel F."/>
            <person name="Lajus A."/>
            <person name="Zhou Y."/>
            <person name="Gourion B."/>
            <person name="Barbe V."/>
            <person name="Chang J."/>
            <person name="Cruveiller S."/>
            <person name="Dossat C."/>
            <person name="Gillett W."/>
            <person name="Gruffaz C."/>
            <person name="Haugen E."/>
            <person name="Hourcade E."/>
            <person name="Levy R."/>
            <person name="Mangenot S."/>
            <person name="Muller E."/>
            <person name="Nadalig T."/>
            <person name="Pagni M."/>
            <person name="Penny C."/>
            <person name="Peyraud R."/>
            <person name="Robinson D.G."/>
            <person name="Roche D."/>
            <person name="Rouy Z."/>
            <person name="Saenampechek C."/>
            <person name="Salvignol G."/>
            <person name="Vallenet D."/>
            <person name="Wu Z."/>
            <person name="Marx C.J."/>
            <person name="Vorholt J.A."/>
            <person name="Olson M.V."/>
            <person name="Kaul R."/>
            <person name="Weissenbach J."/>
            <person name="Medigue C."/>
            <person name="Lidstrom M.E."/>
        </authorList>
    </citation>
    <scope>NUCLEOTIDE SEQUENCE [LARGE SCALE GENOMIC DNA]</scope>
    <source>
        <strain>ATCC 14718 / DSM 1338 / JCM 2805 / NCIMB 9133 / AM1</strain>
    </source>
</reference>
<reference key="4">
    <citation type="journal article" date="1989" name="Biochem. J.">
        <title>The second subunit of methanol dehydrogenase of Methylobacterium extorquens AM1.</title>
        <authorList>
            <person name="Nunn D.N."/>
            <person name="Day D."/>
            <person name="Anthony C."/>
        </authorList>
    </citation>
    <scope>NUCLEOTIDE SEQUENCE [GENOMIC DNA] OF 1-81</scope>
</reference>
<feature type="chain" id="PRO_0000096543" description="Protein MoxR">
    <location>
        <begin position="1"/>
        <end position="343"/>
    </location>
</feature>
<feature type="binding site" evidence="1">
    <location>
        <begin position="53"/>
        <end position="60"/>
    </location>
    <ligand>
        <name>ATP</name>
        <dbReference type="ChEBI" id="CHEBI:30616"/>
    </ligand>
</feature>
<feature type="sequence conflict" description="In Ref. 1; CAA69191." evidence="2" ref="1">
    <location>
        <position position="192"/>
    </location>
</feature>
<feature type="sequence conflict" description="In Ref. 1; CAA69191." evidence="2" ref="1">
    <original>GPAGIRLPGIA</original>
    <variation>APPHPLARHR</variation>
    <location>
        <begin position="255"/>
        <end position="265"/>
    </location>
</feature>
<feature type="sequence conflict" description="In Ref. 1; CAA69191." evidence="2" ref="1">
    <original>Q</original>
    <variation>E</variation>
    <location>
        <position position="327"/>
    </location>
</feature>
<protein>
    <recommendedName>
        <fullName>Protein MoxR</fullName>
    </recommendedName>
    <alternativeName>
        <fullName>Protein MxaR</fullName>
    </alternativeName>
</protein>
<organism>
    <name type="scientific">Methylorubrum extorquens (strain ATCC 14718 / DSM 1338 / JCM 2805 / NCIMB 9133 / AM1)</name>
    <name type="common">Methylobacterium extorquens</name>
    <dbReference type="NCBI Taxonomy" id="272630"/>
    <lineage>
        <taxon>Bacteria</taxon>
        <taxon>Pseudomonadati</taxon>
        <taxon>Pseudomonadota</taxon>
        <taxon>Alphaproteobacteria</taxon>
        <taxon>Hyphomicrobiales</taxon>
        <taxon>Methylobacteriaceae</taxon>
        <taxon>Methylorubrum</taxon>
    </lineage>
</organism>
<comment type="function">
    <text>May be involved in the regulation of formation of active methanol dehydrogenase.</text>
</comment>
<comment type="subcellular location">
    <subcellularLocation>
        <location>Cytoplasm</location>
    </subcellularLocation>
</comment>
<comment type="similarity">
    <text evidence="2">Belongs to the MoxR family.</text>
</comment>
<accession>P30621</accession>
<accession>C5AQA5</accession>